<sequence>MKKKPFYKVLYVQVIFAIVVGVILGHYYPSLATEMKPLGDGFIKLIKMVIGPIIFCTVVTGIAGMEDMKKVGRVGGKALLYFEIVSTFALVLGLAATHILRPGVGFNIDPATLDGKAVASYAAKAHGQSTVDFLMHIIPNTMVDAFAQGEILQILLIALLFGSVLAHLGERGKVVTDFIDGLTRVLFGIVHIVTKLAPIGAFGAMAFTIGKYGVGSLVPLLKLIGTFYLTSVVFVLVVLGAIARFTGFSIIRFVSYIKEELLIVLGTSSSEAALPQLMEKLEKAGCSRSVVGLVVPTGYSFNLDGTNIYMTMAVLFIAQATNIELTWMQQLTLLAVAMLTSKGASGVTGAGFITLAATLAVVPTIPLSGMVLILGIDRFMSECRALTNIVGNGVATVVVSAWEKELDRAKLRQALKGGGEVAATETAGV</sequence>
<keyword id="KW-0997">Cell inner membrane</keyword>
<keyword id="KW-1003">Cell membrane</keyword>
<keyword id="KW-0472">Membrane</keyword>
<keyword id="KW-1185">Reference proteome</keyword>
<keyword id="KW-0769">Symport</keyword>
<keyword id="KW-0812">Transmembrane</keyword>
<keyword id="KW-1133">Transmembrane helix</keyword>
<keyword id="KW-0813">Transport</keyword>
<comment type="function">
    <text evidence="1">Responsible for the transport of dicarboxylates such as succinate, fumarate, and malate from the periplasm across the membrane.</text>
</comment>
<comment type="subcellular location">
    <subcellularLocation>
        <location evidence="1">Cell inner membrane</location>
        <topology evidence="1">Multi-pass membrane protein</topology>
    </subcellularLocation>
</comment>
<comment type="similarity">
    <text evidence="1">Belongs to the dicarboxylate/amino acid:cation symporter (DAACS) (TC 2.A.23) family.</text>
</comment>
<name>DCTA_BURM1</name>
<protein>
    <recommendedName>
        <fullName evidence="1">C4-dicarboxylate transport protein</fullName>
    </recommendedName>
</protein>
<gene>
    <name evidence="1" type="primary">dctA</name>
    <name type="ordered locus">Bmul_0430</name>
    <name type="ordered locus">BMULJ_02825</name>
</gene>
<feature type="chain" id="PRO_1000140446" description="C4-dicarboxylate transport protein">
    <location>
        <begin position="1"/>
        <end position="429"/>
    </location>
</feature>
<feature type="transmembrane region" description="Helical" evidence="1">
    <location>
        <begin position="9"/>
        <end position="29"/>
    </location>
</feature>
<feature type="transmembrane region" description="Helical" evidence="1">
    <location>
        <begin position="45"/>
        <end position="65"/>
    </location>
</feature>
<feature type="transmembrane region" description="Helical" evidence="1">
    <location>
        <begin position="79"/>
        <end position="99"/>
    </location>
</feature>
<feature type="transmembrane region" description="Helical" evidence="1">
    <location>
        <begin position="149"/>
        <end position="169"/>
    </location>
</feature>
<feature type="transmembrane region" description="Helical" evidence="1">
    <location>
        <begin position="185"/>
        <end position="205"/>
    </location>
</feature>
<feature type="transmembrane region" description="Helical" evidence="1">
    <location>
        <begin position="223"/>
        <end position="243"/>
    </location>
</feature>
<feature type="transmembrane region" description="Helical" evidence="1">
    <location>
        <begin position="308"/>
        <end position="328"/>
    </location>
</feature>
<feature type="transmembrane region" description="Helical" evidence="1">
    <location>
        <begin position="356"/>
        <end position="376"/>
    </location>
</feature>
<dbReference type="EMBL" id="CP000868">
    <property type="protein sequence ID" value="ABX14125.1"/>
    <property type="molecule type" value="Genomic_DNA"/>
</dbReference>
<dbReference type="EMBL" id="AP009385">
    <property type="protein sequence ID" value="BAG44713.1"/>
    <property type="molecule type" value="Genomic_DNA"/>
</dbReference>
<dbReference type="RefSeq" id="WP_006398167.1">
    <property type="nucleotide sequence ID" value="NC_010804.1"/>
</dbReference>
<dbReference type="SMR" id="A9AEI1"/>
<dbReference type="STRING" id="395019.BMULJ_02825"/>
<dbReference type="KEGG" id="bmj:BMULJ_02825"/>
<dbReference type="KEGG" id="bmu:Bmul_0430"/>
<dbReference type="eggNOG" id="COG1301">
    <property type="taxonomic scope" value="Bacteria"/>
</dbReference>
<dbReference type="HOGENOM" id="CLU_019375_7_0_4"/>
<dbReference type="Proteomes" id="UP000008815">
    <property type="component" value="Chromosome 1"/>
</dbReference>
<dbReference type="GO" id="GO:0005886">
    <property type="term" value="C:plasma membrane"/>
    <property type="evidence" value="ECO:0007669"/>
    <property type="project" value="UniProtKB-SubCell"/>
</dbReference>
<dbReference type="GO" id="GO:0015138">
    <property type="term" value="F:fumarate transmembrane transporter activity"/>
    <property type="evidence" value="ECO:0007669"/>
    <property type="project" value="TreeGrafter"/>
</dbReference>
<dbReference type="GO" id="GO:0015366">
    <property type="term" value="F:malate:proton symporter activity"/>
    <property type="evidence" value="ECO:0007669"/>
    <property type="project" value="TreeGrafter"/>
</dbReference>
<dbReference type="GO" id="GO:0015141">
    <property type="term" value="F:succinate transmembrane transporter activity"/>
    <property type="evidence" value="ECO:0007669"/>
    <property type="project" value="TreeGrafter"/>
</dbReference>
<dbReference type="GO" id="GO:0070778">
    <property type="term" value="P:L-aspartate transmembrane transport"/>
    <property type="evidence" value="ECO:0007669"/>
    <property type="project" value="TreeGrafter"/>
</dbReference>
<dbReference type="FunFam" id="1.10.3860.10:FF:000001">
    <property type="entry name" value="C4-dicarboxylate transport protein"/>
    <property type="match status" value="1"/>
</dbReference>
<dbReference type="Gene3D" id="1.10.3860.10">
    <property type="entry name" value="Sodium:dicarboxylate symporter"/>
    <property type="match status" value="1"/>
</dbReference>
<dbReference type="HAMAP" id="MF_01300">
    <property type="entry name" value="C4_dicarb_transport"/>
    <property type="match status" value="1"/>
</dbReference>
<dbReference type="InterPro" id="IPR023954">
    <property type="entry name" value="C4_dicarb_transport"/>
</dbReference>
<dbReference type="InterPro" id="IPR001991">
    <property type="entry name" value="Na-dicarboxylate_symporter"/>
</dbReference>
<dbReference type="InterPro" id="IPR018107">
    <property type="entry name" value="Na-dicarboxylate_symporter_CS"/>
</dbReference>
<dbReference type="InterPro" id="IPR036458">
    <property type="entry name" value="Na:dicarbo_symporter_sf"/>
</dbReference>
<dbReference type="NCBIfam" id="NF002461">
    <property type="entry name" value="PRK01663.1"/>
    <property type="match status" value="1"/>
</dbReference>
<dbReference type="NCBIfam" id="NF009587">
    <property type="entry name" value="PRK13027.1"/>
    <property type="match status" value="1"/>
</dbReference>
<dbReference type="PANTHER" id="PTHR42865:SF1">
    <property type="entry name" value="AEROBIC C4-DICARBOXYLATE TRANSPORT PROTEIN"/>
    <property type="match status" value="1"/>
</dbReference>
<dbReference type="PANTHER" id="PTHR42865">
    <property type="entry name" value="PROTON/GLUTAMATE-ASPARTATE SYMPORTER"/>
    <property type="match status" value="1"/>
</dbReference>
<dbReference type="Pfam" id="PF00375">
    <property type="entry name" value="SDF"/>
    <property type="match status" value="1"/>
</dbReference>
<dbReference type="PRINTS" id="PR00173">
    <property type="entry name" value="EDTRNSPORT"/>
</dbReference>
<dbReference type="SUPFAM" id="SSF118215">
    <property type="entry name" value="Proton glutamate symport protein"/>
    <property type="match status" value="1"/>
</dbReference>
<dbReference type="PROSITE" id="PS00713">
    <property type="entry name" value="NA_DICARBOXYL_SYMP_1"/>
    <property type="match status" value="1"/>
</dbReference>
<dbReference type="PROSITE" id="PS00714">
    <property type="entry name" value="NA_DICARBOXYL_SYMP_2"/>
    <property type="match status" value="1"/>
</dbReference>
<organism>
    <name type="scientific">Burkholderia multivorans (strain ATCC 17616 / 249)</name>
    <dbReference type="NCBI Taxonomy" id="395019"/>
    <lineage>
        <taxon>Bacteria</taxon>
        <taxon>Pseudomonadati</taxon>
        <taxon>Pseudomonadota</taxon>
        <taxon>Betaproteobacteria</taxon>
        <taxon>Burkholderiales</taxon>
        <taxon>Burkholderiaceae</taxon>
        <taxon>Burkholderia</taxon>
        <taxon>Burkholderia cepacia complex</taxon>
    </lineage>
</organism>
<accession>A9AEI1</accession>
<evidence type="ECO:0000255" key="1">
    <source>
        <dbReference type="HAMAP-Rule" id="MF_01300"/>
    </source>
</evidence>
<reference key="1">
    <citation type="submission" date="2007-10" db="EMBL/GenBank/DDBJ databases">
        <title>Complete sequence of chromosome 1 of Burkholderia multivorans ATCC 17616.</title>
        <authorList>
            <person name="Copeland A."/>
            <person name="Lucas S."/>
            <person name="Lapidus A."/>
            <person name="Barry K."/>
            <person name="Glavina del Rio T."/>
            <person name="Dalin E."/>
            <person name="Tice H."/>
            <person name="Pitluck S."/>
            <person name="Chain P."/>
            <person name="Malfatti S."/>
            <person name="Shin M."/>
            <person name="Vergez L."/>
            <person name="Schmutz J."/>
            <person name="Larimer F."/>
            <person name="Land M."/>
            <person name="Hauser L."/>
            <person name="Kyrpides N."/>
            <person name="Kim E."/>
            <person name="Tiedje J."/>
            <person name="Richardson P."/>
        </authorList>
    </citation>
    <scope>NUCLEOTIDE SEQUENCE [LARGE SCALE GENOMIC DNA]</scope>
    <source>
        <strain>ATCC 17616 / 249</strain>
    </source>
</reference>
<reference key="2">
    <citation type="submission" date="2007-04" db="EMBL/GenBank/DDBJ databases">
        <title>Complete genome sequence of Burkholderia multivorans ATCC 17616.</title>
        <authorList>
            <person name="Ohtsubo Y."/>
            <person name="Yamashita A."/>
            <person name="Kurokawa K."/>
            <person name="Takami H."/>
            <person name="Yuhara S."/>
            <person name="Nishiyama E."/>
            <person name="Endo R."/>
            <person name="Miyazaki R."/>
            <person name="Ono A."/>
            <person name="Yano K."/>
            <person name="Ito M."/>
            <person name="Sota M."/>
            <person name="Yuji N."/>
            <person name="Hattori M."/>
            <person name="Tsuda M."/>
        </authorList>
    </citation>
    <scope>NUCLEOTIDE SEQUENCE [LARGE SCALE GENOMIC DNA]</scope>
    <source>
        <strain>ATCC 17616 / 249</strain>
    </source>
</reference>
<proteinExistence type="inferred from homology"/>